<sequence>MTKQPEDWLDDVPGDDIEDEDDEIIWVSKSEIKRDAEELKRLGAEIVDLGKNALDKIPLDADLRAAIELAQRIKMEGRRRQLQLIGKMLRQRDVEPIRQALDKLKNRHNQQVVLFHKLENLRDRLIDQGDDAIAEVLNLWPDADRQQLRTLIRNAKKEKEGNKPPKSARQIFQYLRELAENEG</sequence>
<evidence type="ECO:0000255" key="1">
    <source>
        <dbReference type="HAMAP-Rule" id="MF_00765"/>
    </source>
</evidence>
<name>DARP_ECO8A</name>
<dbReference type="EMBL" id="CU928160">
    <property type="protein sequence ID" value="CAR01208.1"/>
    <property type="molecule type" value="Genomic_DNA"/>
</dbReference>
<dbReference type="SMR" id="B7M9J4"/>
<dbReference type="KEGG" id="ecr:ECIAI1_4466"/>
<dbReference type="HOGENOM" id="CLU_106757_2_0_6"/>
<dbReference type="GO" id="GO:0005829">
    <property type="term" value="C:cytosol"/>
    <property type="evidence" value="ECO:0007669"/>
    <property type="project" value="TreeGrafter"/>
</dbReference>
<dbReference type="GO" id="GO:0043022">
    <property type="term" value="F:ribosome binding"/>
    <property type="evidence" value="ECO:0007669"/>
    <property type="project" value="UniProtKB-UniRule"/>
</dbReference>
<dbReference type="GO" id="GO:0019843">
    <property type="term" value="F:rRNA binding"/>
    <property type="evidence" value="ECO:0007669"/>
    <property type="project" value="UniProtKB-UniRule"/>
</dbReference>
<dbReference type="GO" id="GO:1902626">
    <property type="term" value="P:assembly of large subunit precursor of preribosome"/>
    <property type="evidence" value="ECO:0007669"/>
    <property type="project" value="UniProtKB-UniRule"/>
</dbReference>
<dbReference type="CDD" id="cd16331">
    <property type="entry name" value="YjgA-like"/>
    <property type="match status" value="1"/>
</dbReference>
<dbReference type="FunFam" id="1.10.60.30:FF:000001">
    <property type="entry name" value="UPF0307 protein YjgA"/>
    <property type="match status" value="1"/>
</dbReference>
<dbReference type="FunFam" id="1.10.60.30:FF:000002">
    <property type="entry name" value="UPF0307 protein YjgA"/>
    <property type="match status" value="1"/>
</dbReference>
<dbReference type="Gene3D" id="1.10.60.30">
    <property type="entry name" value="PSPTO4464-like domains"/>
    <property type="match status" value="2"/>
</dbReference>
<dbReference type="HAMAP" id="MF_00765">
    <property type="entry name" value="DarP"/>
    <property type="match status" value="1"/>
</dbReference>
<dbReference type="InterPro" id="IPR006839">
    <property type="entry name" value="DarP"/>
</dbReference>
<dbReference type="InterPro" id="IPR023153">
    <property type="entry name" value="DarP_sf"/>
</dbReference>
<dbReference type="NCBIfam" id="NF003593">
    <property type="entry name" value="PRK05255.1-1"/>
    <property type="match status" value="1"/>
</dbReference>
<dbReference type="PANTHER" id="PTHR38101">
    <property type="entry name" value="UPF0307 PROTEIN YJGA"/>
    <property type="match status" value="1"/>
</dbReference>
<dbReference type="PANTHER" id="PTHR38101:SF1">
    <property type="entry name" value="UPF0307 PROTEIN YJGA"/>
    <property type="match status" value="1"/>
</dbReference>
<dbReference type="Pfam" id="PF04751">
    <property type="entry name" value="DarP"/>
    <property type="match status" value="1"/>
</dbReference>
<dbReference type="PIRSF" id="PIRSF016183">
    <property type="entry name" value="UCP016183"/>
    <property type="match status" value="1"/>
</dbReference>
<dbReference type="SUPFAM" id="SSF158710">
    <property type="entry name" value="PSPTO4464-like"/>
    <property type="match status" value="1"/>
</dbReference>
<proteinExistence type="inferred from homology"/>
<keyword id="KW-0963">Cytoplasm</keyword>
<keyword id="KW-0690">Ribosome biogenesis</keyword>
<keyword id="KW-0694">RNA-binding</keyword>
<keyword id="KW-0699">rRNA-binding</keyword>
<organism>
    <name type="scientific">Escherichia coli O8 (strain IAI1)</name>
    <dbReference type="NCBI Taxonomy" id="585034"/>
    <lineage>
        <taxon>Bacteria</taxon>
        <taxon>Pseudomonadati</taxon>
        <taxon>Pseudomonadota</taxon>
        <taxon>Gammaproteobacteria</taxon>
        <taxon>Enterobacterales</taxon>
        <taxon>Enterobacteriaceae</taxon>
        <taxon>Escherichia</taxon>
    </lineage>
</organism>
<accession>B7M9J4</accession>
<feature type="chain" id="PRO_1000198385" description="Dual-action ribosomal maturation protein DarP">
    <location>
        <begin position="1"/>
        <end position="183"/>
    </location>
</feature>
<protein>
    <recommendedName>
        <fullName evidence="1">Dual-action ribosomal maturation protein DarP</fullName>
    </recommendedName>
    <alternativeName>
        <fullName evidence="1">Large ribosomal subunit assembly factor DarP</fullName>
    </alternativeName>
</protein>
<reference key="1">
    <citation type="journal article" date="2009" name="PLoS Genet.">
        <title>Organised genome dynamics in the Escherichia coli species results in highly diverse adaptive paths.</title>
        <authorList>
            <person name="Touchon M."/>
            <person name="Hoede C."/>
            <person name="Tenaillon O."/>
            <person name="Barbe V."/>
            <person name="Baeriswyl S."/>
            <person name="Bidet P."/>
            <person name="Bingen E."/>
            <person name="Bonacorsi S."/>
            <person name="Bouchier C."/>
            <person name="Bouvet O."/>
            <person name="Calteau A."/>
            <person name="Chiapello H."/>
            <person name="Clermont O."/>
            <person name="Cruveiller S."/>
            <person name="Danchin A."/>
            <person name="Diard M."/>
            <person name="Dossat C."/>
            <person name="Karoui M.E."/>
            <person name="Frapy E."/>
            <person name="Garry L."/>
            <person name="Ghigo J.M."/>
            <person name="Gilles A.M."/>
            <person name="Johnson J."/>
            <person name="Le Bouguenec C."/>
            <person name="Lescat M."/>
            <person name="Mangenot S."/>
            <person name="Martinez-Jehanne V."/>
            <person name="Matic I."/>
            <person name="Nassif X."/>
            <person name="Oztas S."/>
            <person name="Petit M.A."/>
            <person name="Pichon C."/>
            <person name="Rouy Z."/>
            <person name="Ruf C.S."/>
            <person name="Schneider D."/>
            <person name="Tourret J."/>
            <person name="Vacherie B."/>
            <person name="Vallenet D."/>
            <person name="Medigue C."/>
            <person name="Rocha E.P.C."/>
            <person name="Denamur E."/>
        </authorList>
    </citation>
    <scope>NUCLEOTIDE SEQUENCE [LARGE SCALE GENOMIC DNA]</scope>
    <source>
        <strain>IAI1</strain>
    </source>
</reference>
<comment type="function">
    <text evidence="1">Member of a network of 50S ribosomal subunit biogenesis factors which assembles along the 30S-50S interface, preventing incorrect 23S rRNA structures from forming. Promotes peptidyl transferase center (PTC) maturation.</text>
</comment>
<comment type="subcellular location">
    <subcellularLocation>
        <location evidence="1">Cytoplasm</location>
    </subcellularLocation>
    <text evidence="1">Associates with late stage pre-50S ribosomal subunits.</text>
</comment>
<comment type="similarity">
    <text evidence="1">Belongs to the DarP family.</text>
</comment>
<gene>
    <name evidence="1" type="primary">darP</name>
    <name type="ordered locus">ECIAI1_4466</name>
</gene>